<accession>A0RJH3</accession>
<dbReference type="EMBL" id="CP000485">
    <property type="protein sequence ID" value="ABK87366.1"/>
    <property type="molecule type" value="Genomic_DNA"/>
</dbReference>
<dbReference type="RefSeq" id="WP_001125945.1">
    <property type="nucleotide sequence ID" value="NC_008600.1"/>
</dbReference>
<dbReference type="SMR" id="A0RJH3"/>
<dbReference type="GeneID" id="93006536"/>
<dbReference type="KEGG" id="btl:BALH_4158"/>
<dbReference type="HOGENOM" id="CLU_169643_3_0_9"/>
<dbReference type="GO" id="GO:0022625">
    <property type="term" value="C:cytosolic large ribosomal subunit"/>
    <property type="evidence" value="ECO:0007669"/>
    <property type="project" value="TreeGrafter"/>
</dbReference>
<dbReference type="GO" id="GO:0003735">
    <property type="term" value="F:structural constituent of ribosome"/>
    <property type="evidence" value="ECO:0007669"/>
    <property type="project" value="InterPro"/>
</dbReference>
<dbReference type="GO" id="GO:0006412">
    <property type="term" value="P:translation"/>
    <property type="evidence" value="ECO:0007669"/>
    <property type="project" value="UniProtKB-UniRule"/>
</dbReference>
<dbReference type="FunFam" id="4.10.410.60:FF:000001">
    <property type="entry name" value="50S ribosomal protein L35"/>
    <property type="match status" value="1"/>
</dbReference>
<dbReference type="Gene3D" id="4.10.410.60">
    <property type="match status" value="1"/>
</dbReference>
<dbReference type="HAMAP" id="MF_00514">
    <property type="entry name" value="Ribosomal_bL35"/>
    <property type="match status" value="1"/>
</dbReference>
<dbReference type="InterPro" id="IPR001706">
    <property type="entry name" value="Ribosomal_bL35"/>
</dbReference>
<dbReference type="InterPro" id="IPR021137">
    <property type="entry name" value="Ribosomal_bL35-like"/>
</dbReference>
<dbReference type="InterPro" id="IPR018265">
    <property type="entry name" value="Ribosomal_bL35_CS"/>
</dbReference>
<dbReference type="InterPro" id="IPR037229">
    <property type="entry name" value="Ribosomal_bL35_sf"/>
</dbReference>
<dbReference type="NCBIfam" id="TIGR00001">
    <property type="entry name" value="rpmI_bact"/>
    <property type="match status" value="1"/>
</dbReference>
<dbReference type="PANTHER" id="PTHR33343">
    <property type="entry name" value="54S RIBOSOMAL PROTEIN BL35M"/>
    <property type="match status" value="1"/>
</dbReference>
<dbReference type="PANTHER" id="PTHR33343:SF1">
    <property type="entry name" value="LARGE RIBOSOMAL SUBUNIT PROTEIN BL35M"/>
    <property type="match status" value="1"/>
</dbReference>
<dbReference type="Pfam" id="PF01632">
    <property type="entry name" value="Ribosomal_L35p"/>
    <property type="match status" value="1"/>
</dbReference>
<dbReference type="PRINTS" id="PR00064">
    <property type="entry name" value="RIBOSOMALL35"/>
</dbReference>
<dbReference type="SUPFAM" id="SSF143034">
    <property type="entry name" value="L35p-like"/>
    <property type="match status" value="1"/>
</dbReference>
<dbReference type="PROSITE" id="PS00936">
    <property type="entry name" value="RIBOSOMAL_L35"/>
    <property type="match status" value="1"/>
</dbReference>
<proteinExistence type="inferred from homology"/>
<sequence>MPKQKTHRGAAKRFKKTGSGKLKRSHAYTSHLFANKSTKAKRKLRKAGVVSAGDFKRIRQMLDNLK</sequence>
<name>RL35_BACAH</name>
<keyword id="KW-0687">Ribonucleoprotein</keyword>
<keyword id="KW-0689">Ribosomal protein</keyword>
<protein>
    <recommendedName>
        <fullName evidence="1">Large ribosomal subunit protein bL35</fullName>
    </recommendedName>
    <alternativeName>
        <fullName evidence="3">50S ribosomal protein L35</fullName>
    </alternativeName>
</protein>
<comment type="similarity">
    <text evidence="1">Belongs to the bacterial ribosomal protein bL35 family.</text>
</comment>
<reference key="1">
    <citation type="journal article" date="2007" name="J. Bacteriol.">
        <title>The complete genome sequence of Bacillus thuringiensis Al Hakam.</title>
        <authorList>
            <person name="Challacombe J.F."/>
            <person name="Altherr M.R."/>
            <person name="Xie G."/>
            <person name="Bhotika S.S."/>
            <person name="Brown N."/>
            <person name="Bruce D."/>
            <person name="Campbell C.S."/>
            <person name="Campbell M.L."/>
            <person name="Chen J."/>
            <person name="Chertkov O."/>
            <person name="Cleland C."/>
            <person name="Dimitrijevic M."/>
            <person name="Doggett N.A."/>
            <person name="Fawcett J.J."/>
            <person name="Glavina T."/>
            <person name="Goodwin L.A."/>
            <person name="Green L.D."/>
            <person name="Han C.S."/>
            <person name="Hill K.K."/>
            <person name="Hitchcock P."/>
            <person name="Jackson P.J."/>
            <person name="Keim P."/>
            <person name="Kewalramani A.R."/>
            <person name="Longmire J."/>
            <person name="Lucas S."/>
            <person name="Malfatti S."/>
            <person name="Martinez D."/>
            <person name="McMurry K."/>
            <person name="Meincke L.J."/>
            <person name="Misra M."/>
            <person name="Moseman B.L."/>
            <person name="Mundt M."/>
            <person name="Munk A.C."/>
            <person name="Okinaka R.T."/>
            <person name="Parson-Quintana B."/>
            <person name="Reilly L.P."/>
            <person name="Richardson P."/>
            <person name="Robinson D.L."/>
            <person name="Saunders E."/>
            <person name="Tapia R."/>
            <person name="Tesmer J.G."/>
            <person name="Thayer N."/>
            <person name="Thompson L.S."/>
            <person name="Tice H."/>
            <person name="Ticknor L.O."/>
            <person name="Wills P.L."/>
            <person name="Gilna P."/>
            <person name="Brettin T.S."/>
        </authorList>
    </citation>
    <scope>NUCLEOTIDE SEQUENCE [LARGE SCALE GENOMIC DNA]</scope>
    <source>
        <strain>Al Hakam</strain>
    </source>
</reference>
<feature type="chain" id="PRO_1000050658" description="Large ribosomal subunit protein bL35">
    <location>
        <begin position="1"/>
        <end position="66"/>
    </location>
</feature>
<feature type="region of interest" description="Disordered" evidence="2">
    <location>
        <begin position="1"/>
        <end position="26"/>
    </location>
</feature>
<organism>
    <name type="scientific">Bacillus thuringiensis (strain Al Hakam)</name>
    <dbReference type="NCBI Taxonomy" id="412694"/>
    <lineage>
        <taxon>Bacteria</taxon>
        <taxon>Bacillati</taxon>
        <taxon>Bacillota</taxon>
        <taxon>Bacilli</taxon>
        <taxon>Bacillales</taxon>
        <taxon>Bacillaceae</taxon>
        <taxon>Bacillus</taxon>
        <taxon>Bacillus cereus group</taxon>
    </lineage>
</organism>
<gene>
    <name evidence="1" type="primary">rpmI</name>
    <name type="ordered locus">BALH_4158</name>
</gene>
<evidence type="ECO:0000255" key="1">
    <source>
        <dbReference type="HAMAP-Rule" id="MF_00514"/>
    </source>
</evidence>
<evidence type="ECO:0000256" key="2">
    <source>
        <dbReference type="SAM" id="MobiDB-lite"/>
    </source>
</evidence>
<evidence type="ECO:0000305" key="3"/>